<reference key="1">
    <citation type="submission" date="2008-09" db="EMBL/GenBank/DDBJ databases">
        <title>A comprehensive survey of the N. tabacum transcriptome.</title>
        <authorList>
            <person name="Coates S.A."/>
            <person name="Dorlhac de Borne F."/>
            <person name="Ross J."/>
            <person name="Verrier J.L."/>
            <person name="Ward M."/>
            <person name="Delon R."/>
        </authorList>
    </citation>
    <scope>NUCLEOTIDE SEQUENCE [LARGE SCALE MRNA]</scope>
    <source>
        <strain>cv. K326</strain>
        <tissue>Seedling</tissue>
    </source>
</reference>
<reference key="2">
    <citation type="journal article" date="2014" name="Plant Physiol.">
        <title>Functional and evolutionary analysis of the CASPARIAN STRIP MEMBRANE DOMAIN PROTEIN family.</title>
        <authorList>
            <person name="Roppolo D."/>
            <person name="Boeckmann B."/>
            <person name="Pfister A."/>
            <person name="Boutet E."/>
            <person name="Rubio M.C."/>
            <person name="Denervaud-Tendon V."/>
            <person name="Vermeer J.E."/>
            <person name="Gheyselinck J."/>
            <person name="Xenarios I."/>
            <person name="Geldner N."/>
        </authorList>
    </citation>
    <scope>GENE FAMILY</scope>
    <scope>NOMENCLATURE</scope>
</reference>
<proteinExistence type="evidence at transcript level"/>
<dbReference type="EMBL" id="DV160871">
    <property type="status" value="NOT_ANNOTATED_CDS"/>
    <property type="molecule type" value="mRNA"/>
</dbReference>
<dbReference type="RefSeq" id="NP_001412690.1">
    <property type="nucleotide sequence ID" value="NM_001425761.1"/>
</dbReference>
<dbReference type="RefSeq" id="XP_016440932.1">
    <property type="nucleotide sequence ID" value="XM_016585446.1"/>
</dbReference>
<dbReference type="STRING" id="4097.P0DI50"/>
<dbReference type="PaxDb" id="4097-P0DI50"/>
<dbReference type="GeneID" id="107766637"/>
<dbReference type="KEGG" id="nta:107766637"/>
<dbReference type="OMA" id="TSANWIA"/>
<dbReference type="OrthoDB" id="753675at2759"/>
<dbReference type="PhylomeDB" id="P0DI50"/>
<dbReference type="Proteomes" id="UP000084051">
    <property type="component" value="Unplaced"/>
</dbReference>
<dbReference type="GO" id="GO:0048226">
    <property type="term" value="C:Casparian strip"/>
    <property type="evidence" value="ECO:0000318"/>
    <property type="project" value="GO_Central"/>
</dbReference>
<dbReference type="GO" id="GO:0005886">
    <property type="term" value="C:plasma membrane"/>
    <property type="evidence" value="ECO:0000318"/>
    <property type="project" value="GO_Central"/>
</dbReference>
<dbReference type="GO" id="GO:0042545">
    <property type="term" value="P:cell wall modification"/>
    <property type="evidence" value="ECO:0000318"/>
    <property type="project" value="GO_Central"/>
</dbReference>
<dbReference type="GO" id="GO:0007043">
    <property type="term" value="P:cell-cell junction assembly"/>
    <property type="evidence" value="ECO:0000318"/>
    <property type="project" value="GO_Central"/>
</dbReference>
<dbReference type="InterPro" id="IPR006459">
    <property type="entry name" value="CASP/CASPL"/>
</dbReference>
<dbReference type="InterPro" id="IPR006702">
    <property type="entry name" value="CASP_dom"/>
</dbReference>
<dbReference type="InterPro" id="IPR044173">
    <property type="entry name" value="CASPL"/>
</dbReference>
<dbReference type="NCBIfam" id="TIGR01569">
    <property type="entry name" value="A_tha_TIGR01569"/>
    <property type="match status" value="1"/>
</dbReference>
<dbReference type="PANTHER" id="PTHR36488:SF11">
    <property type="entry name" value="CASP-LIKE PROTEIN"/>
    <property type="match status" value="1"/>
</dbReference>
<dbReference type="PANTHER" id="PTHR36488">
    <property type="entry name" value="CASP-LIKE PROTEIN 1U1"/>
    <property type="match status" value="1"/>
</dbReference>
<dbReference type="Pfam" id="PF04535">
    <property type="entry name" value="CASP_dom"/>
    <property type="match status" value="1"/>
</dbReference>
<keyword id="KW-1003">Cell membrane</keyword>
<keyword id="KW-0961">Cell wall biogenesis/degradation</keyword>
<keyword id="KW-0472">Membrane</keyword>
<keyword id="KW-1185">Reference proteome</keyword>
<keyword id="KW-0812">Transmembrane</keyword>
<keyword id="KW-1133">Transmembrane helix</keyword>
<feature type="chain" id="PRO_0000417810" description="Casparian strip membrane protein 1">
    <location>
        <begin position="1"/>
        <end position="209"/>
    </location>
</feature>
<feature type="topological domain" description="Cytoplasmic" evidence="2">
    <location>
        <begin position="1"/>
        <end position="46"/>
    </location>
</feature>
<feature type="transmembrane region" description="Helical" evidence="2">
    <location>
        <begin position="47"/>
        <end position="67"/>
    </location>
</feature>
<feature type="topological domain" description="Extracellular" evidence="2">
    <location>
        <begin position="68"/>
        <end position="96"/>
    </location>
</feature>
<feature type="transmembrane region" description="Helical" evidence="2">
    <location>
        <begin position="97"/>
        <end position="117"/>
    </location>
</feature>
<feature type="topological domain" description="Cytoplasmic" evidence="2">
    <location>
        <begin position="118"/>
        <end position="129"/>
    </location>
</feature>
<feature type="transmembrane region" description="Helical" evidence="2">
    <location>
        <begin position="130"/>
        <end position="150"/>
    </location>
</feature>
<feature type="topological domain" description="Extracellular" evidence="2">
    <location>
        <begin position="151"/>
        <end position="179"/>
    </location>
</feature>
<feature type="transmembrane region" description="Helical" evidence="2">
    <location>
        <begin position="180"/>
        <end position="200"/>
    </location>
</feature>
<feature type="topological domain" description="Cytoplasmic" evidence="2">
    <location>
        <begin position="201"/>
        <end position="209"/>
    </location>
</feature>
<accession>P0DI50</accession>
<comment type="function">
    <text evidence="1">Regulates membrane-cell wall junctions and localized cell wall deposition. Required for establishment of the Casparian strip membrane domain (CSD) and the subsequent formation of Casparian strips, a cell wall modification of the root endodermis that determines an apoplastic barrier between the intraorganismal apoplasm and the extraorganismal apoplasm and prevents lateral diffusion (By similarity).</text>
</comment>
<comment type="subunit">
    <text evidence="1">Homodimer and heterodimers.</text>
</comment>
<comment type="subcellular location">
    <subcellularLocation>
        <location evidence="1">Cell membrane</location>
        <topology evidence="1">Multi-pass membrane protein</topology>
    </subcellularLocation>
    <text evidence="1">Very restricted localization following a belt shape within the plasma membrane which coincides with the position of the Casparian strip membrane domain in the root endodermis.</text>
</comment>
<comment type="similarity">
    <text evidence="3">Belongs to the Casparian strip membrane proteins (CASP) family.</text>
</comment>
<organism>
    <name type="scientific">Nicotiana tabacum</name>
    <name type="common">Common tobacco</name>
    <dbReference type="NCBI Taxonomy" id="4097"/>
    <lineage>
        <taxon>Eukaryota</taxon>
        <taxon>Viridiplantae</taxon>
        <taxon>Streptophyta</taxon>
        <taxon>Embryophyta</taxon>
        <taxon>Tracheophyta</taxon>
        <taxon>Spermatophyta</taxon>
        <taxon>Magnoliopsida</taxon>
        <taxon>eudicotyledons</taxon>
        <taxon>Gunneridae</taxon>
        <taxon>Pentapetalae</taxon>
        <taxon>asterids</taxon>
        <taxon>lamiids</taxon>
        <taxon>Solanales</taxon>
        <taxon>Solanaceae</taxon>
        <taxon>Nicotianoideae</taxon>
        <taxon>Nicotianeae</taxon>
        <taxon>Nicotiana</taxon>
    </lineage>
</organism>
<name>CASP1_TOBAC</name>
<protein>
    <recommendedName>
        <fullName>Casparian strip membrane protein 1</fullName>
        <shortName>NtCASP1</shortName>
    </recommendedName>
</protein>
<sequence length="209" mass="22236">MEKSESTKIDVVETNKERKGKAPLLGKAPVVAAAVVHAKGGGAKRGIAIFDLILRIAAFASALGAAVAMATTEETLPFFTQFFQFEASYDDLPTFTFFVVAMAIVVAYLVLSVPFSIVCIVRPHAVVPRLLLIIFDTVIIALTTGAAGSSAAIVYLAHNGNQDANWLAICQQFGDFCQRVSGAVVAAFVTVVILIFLVVLSASALRRHH</sequence>
<evidence type="ECO:0000250" key="1"/>
<evidence type="ECO:0000255" key="2"/>
<evidence type="ECO:0000305" key="3"/>